<name>RIPR2_BOVIN</name>
<sequence>MLVGSQSFSPGGPNGIIRSQSFAGFSGLQERRSRCNSFIENSSAVKKPQAKLKKMHNLGHKNSSPPKEPQPKRVEEVYRALKNGLDEYLEVHQTELDKLTTQLKDMRRNSRLGVLYDLDKQIKTIERYMRRLEFHISKVDELYEAYCIQRRLQDGASKMKQAFATSPASKAARESLAEINRSYKEYTENMCAIEAELEKQLGEFSIKMKGLAGFARLCPGDQYEIFMKYGRQRWKLKGRIEVNGKQSWDGEEMVFLPLIVGFISIKVTELKGLATHLLVGSVTCETKELFAARPQVVAVDINDLGTIKLNLEITWYPFDVEDMTPSSGAGNKVAALQRRMSMYSQGTPETPTFKDHSFFSNLPDDIFENGKAAEEKMPLSLSFSDLPNGDCTLAPGPADSLPGACAANPEITITSTELPPGSQSSQNEGLKDSSSASCSSSSREGSEPRPHPEGETQGLGKPEGCPVATGARPERLFLQKGVAEALLQEALLQEPSELKPVELDTFEGNITKQLVKRLTSAEVPAATERLLSEGSISAESEGCRSFLDGSLEDAFNGLFLALEPHKEQYKEFQDLNQEVMHLDDILKCKPAVSRSRSSSLSLTVESALESFDFLNTSDFDEEEDGDEVCNVGGGADSVFSDTETEKNSYRSVHPEARGHLSEALTEDTGVGTSVAGSPLPLTTGNESLDLTIIRHLQYCTQLVQQIVLSSKTPFVASNLLEKLSRQIQVMEKLSAVSDENIGNISSVIEAIPEFHKKLSLLSFWTKCCTPIGVYHSSADRVIKQLEASFARTVNRDYPGLADPVFHTLVSQILDRAEPLLPASLSSEVITVFQYYSYFTSHGVSDLESYLNQLAKQVSVVQTLQSLRDEKLLQAVSDLAPGSFPAPQEEVLRTLALLLTGEDSGASEAVTLYLTAASRSEHFREKALLYYCEALTKTDFRLQKAACLALKSLKATESIKMLVTLCQSDTEEIRNVASETLLSLGEDGRLAYEQLDKFPRDCVKVGGRLASEVATAF</sequence>
<keyword id="KW-0130">Cell adhesion</keyword>
<keyword id="KW-1003">Cell membrane</keyword>
<keyword id="KW-0966">Cell projection</keyword>
<keyword id="KW-0145">Chemotaxis</keyword>
<keyword id="KW-0175">Coiled coil</keyword>
<keyword id="KW-0963">Cytoplasm</keyword>
<keyword id="KW-0206">Cytoskeleton</keyword>
<keyword id="KW-0221">Differentiation</keyword>
<keyword id="KW-1009">Hearing</keyword>
<keyword id="KW-0472">Membrane</keyword>
<keyword id="KW-0517">Myogenesis</keyword>
<keyword id="KW-0597">Phosphoprotein</keyword>
<keyword id="KW-1185">Reference proteome</keyword>
<keyword id="KW-0734">Signal transduction inhibitor</keyword>
<accession>Q3B7M3</accession>
<organism>
    <name type="scientific">Bos taurus</name>
    <name type="common">Bovine</name>
    <dbReference type="NCBI Taxonomy" id="9913"/>
    <lineage>
        <taxon>Eukaryota</taxon>
        <taxon>Metazoa</taxon>
        <taxon>Chordata</taxon>
        <taxon>Craniata</taxon>
        <taxon>Vertebrata</taxon>
        <taxon>Euteleostomi</taxon>
        <taxon>Mammalia</taxon>
        <taxon>Eutheria</taxon>
        <taxon>Laurasiatheria</taxon>
        <taxon>Artiodactyla</taxon>
        <taxon>Ruminantia</taxon>
        <taxon>Pecora</taxon>
        <taxon>Bovidae</taxon>
        <taxon>Bovinae</taxon>
        <taxon>Bos</taxon>
    </lineage>
</organism>
<gene>
    <name evidence="3" type="primary">RIPOR2</name>
    <name type="synonym">FAM65B</name>
</gene>
<evidence type="ECO:0000250" key="1">
    <source>
        <dbReference type="UniProtKB" id="Q7TP54"/>
    </source>
</evidence>
<evidence type="ECO:0000250" key="2">
    <source>
        <dbReference type="UniProtKB" id="Q80U16"/>
    </source>
</evidence>
<evidence type="ECO:0000250" key="3">
    <source>
        <dbReference type="UniProtKB" id="Q9Y4F9"/>
    </source>
</evidence>
<evidence type="ECO:0000255" key="4"/>
<evidence type="ECO:0000256" key="5">
    <source>
        <dbReference type="SAM" id="MobiDB-lite"/>
    </source>
</evidence>
<evidence type="ECO:0000305" key="6"/>
<feature type="chain" id="PRO_0000289113" description="Rho family-interacting cell polarization regulator 2">
    <location>
        <begin position="1"/>
        <end position="1016"/>
    </location>
</feature>
<feature type="region of interest" description="Disordered" evidence="5">
    <location>
        <begin position="44"/>
        <end position="73"/>
    </location>
</feature>
<feature type="region of interest" description="Involved in cell filopodia formation" evidence="3">
    <location>
        <begin position="55"/>
        <end position="113"/>
    </location>
</feature>
<feature type="region of interest" description="Disordered" evidence="5">
    <location>
        <begin position="414"/>
        <end position="469"/>
    </location>
</feature>
<feature type="region of interest" description="Disordered" evidence="5">
    <location>
        <begin position="636"/>
        <end position="656"/>
    </location>
</feature>
<feature type="coiled-coil region" evidence="4">
    <location>
        <begin position="85"/>
        <end position="112"/>
    </location>
</feature>
<feature type="compositionally biased region" description="Basic residues" evidence="5">
    <location>
        <begin position="48"/>
        <end position="59"/>
    </location>
</feature>
<feature type="compositionally biased region" description="Polar residues" evidence="5">
    <location>
        <begin position="414"/>
        <end position="428"/>
    </location>
</feature>
<feature type="compositionally biased region" description="Low complexity" evidence="5">
    <location>
        <begin position="433"/>
        <end position="442"/>
    </location>
</feature>
<feature type="compositionally biased region" description="Basic and acidic residues" evidence="5">
    <location>
        <begin position="444"/>
        <end position="454"/>
    </location>
</feature>
<feature type="compositionally biased region" description="Basic and acidic residues" evidence="5">
    <location>
        <begin position="643"/>
        <end position="656"/>
    </location>
</feature>
<feature type="modified residue" description="Phosphoserine" evidence="3">
    <location>
        <position position="21"/>
    </location>
</feature>
<feature type="modified residue" description="Phosphoserine" evidence="3">
    <location>
        <position position="37"/>
    </location>
</feature>
<feature type="modified residue" description="Phosphoserine" evidence="3">
    <location>
        <position position="341"/>
    </location>
</feature>
<feature type="modified residue" description="Phosphoserine" evidence="2">
    <location>
        <position position="520"/>
    </location>
</feature>
<feature type="modified residue" description="Phosphoserine" evidence="3">
    <location>
        <position position="532"/>
    </location>
</feature>
<reference key="1">
    <citation type="submission" date="2005-10" db="EMBL/GenBank/DDBJ databases">
        <authorList>
            <consortium name="NIH - Mammalian Gene Collection (MGC) project"/>
        </authorList>
    </citation>
    <scope>NUCLEOTIDE SEQUENCE [LARGE SCALE MRNA]</scope>
    <source>
        <strain>Hereford</strain>
        <tissue>Hypothalamus</tissue>
    </source>
</reference>
<comment type="function">
    <text evidence="2 3">Acts as an inhibitor of the small GTPase RHOA and plays several roles in the regulation of myoblast and hair cell differentiation, lymphocyte T proliferation and neutrophil polarization. Plays a role in fetal mononuclear myoblast differentiation by promoting filopodia and myotube formation. Maintains naive T lymphocytes in a quiescent state and prevents chemokine-induced T lymphocyte responses, such as cell adhesion, polarization and migration. Involved also in the regulation of neutrophil polarization, chemotaxis and adhesion. Required for normal development of inner and outer hair cell stereocilia within the cochlea of the inner ear. Plays a role for maintaining the structural organization of the basal domain of stereocilia. Involved in mechanosensory hair cell function. Required for normal hearing.</text>
</comment>
<comment type="subunit">
    <text evidence="2 3">Homooligomer; homooligomerization is regulated by RHOC and leads to the formation of concatemers through the association of N- and C-termini (By similarity). Interacts (phosphorylated form) with 14-3-3 proteins; these interactions occur during myogenic cell differentiation and also induces T cell proliferation arrest (By similarity). Interacts (phosphorylated form) with HDAC6; this interaction occurs during early myogenic differentiation, prevents HDAC6 to deacetylate tubulin and also induces T cell proliferation arrest (By similarity). Interacts with DYSF; this interaction occurs during early myogenic differentiation (By similarity). Interacts with MYOF (By similarity). Interacts (via active GTP- or inactive GDP-bound forms) with RHOA; this interaction is direct, blocks the loading of GTP to RHOA and decreases upon chemokine CCL19 stimulation in primary T lymphocytes. Interacts with RHOC (By similarity). Interacts (via phosphorylated form) with YWHAB; this interaction occurs in a chemokine-dependent manner and does not compete for binding of RIPOR2 with RHOA nor blocks inhibition of RIPOR2-mediated RHOA activity (By similarity). Interacts with YWHAE (By similarity). Interacts with YWHAQ (By similarity).</text>
</comment>
<comment type="subcellular location">
    <subcellularLocation>
        <location evidence="3">Cytoplasm</location>
    </subcellularLocation>
    <subcellularLocation>
        <location evidence="3">Cytoplasm</location>
        <location evidence="3">Cytoskeleton</location>
    </subcellularLocation>
    <subcellularLocation>
        <location evidence="3">Cell projection</location>
        <location evidence="3">Filopodium</location>
    </subcellularLocation>
    <subcellularLocation>
        <location evidence="1">Apical cell membrane</location>
    </subcellularLocation>
    <subcellularLocation>
        <location evidence="2">Cell projection</location>
        <location evidence="2">Stereocilium</location>
    </subcellularLocation>
    <subcellularLocation>
        <location evidence="1">Cell projection</location>
        <location evidence="1">Stereocilium membrane</location>
    </subcellularLocation>
    <text evidence="1 2 3">Localized in the cytoplasm in cells undergoing mitosis. Colocalized with F-actin. Accumulates at the leading edge of polarized neutrophils in a chemokine-dependent manner. Localized with RHOC within the basal domain of hair cell stereocilia, near the taper region. Detected in punctate pattern forming a circumferential ring at the stereocilia base. Localized to the apical stereocilia of inner and outer hair cells.</text>
</comment>
<comment type="PTM">
    <text evidence="3">Phosphorylated. Chemokine-induced phosphorylation in neutrophils occurs in a PKC- and AKT-dependent manner, resulting in RIPOR2 interaction with YWHAB and stabilization. Phosphorylated by PKCA, AKT1 and MAPKAPK1A; in vitro.</text>
</comment>
<comment type="similarity">
    <text evidence="6">Belongs to the RIPOR family.</text>
</comment>
<dbReference type="EMBL" id="BC107544">
    <property type="protein sequence ID" value="AAI07545.1"/>
    <property type="molecule type" value="mRNA"/>
</dbReference>
<dbReference type="RefSeq" id="NP_001030502.1">
    <property type="nucleotide sequence ID" value="NM_001035425.1"/>
</dbReference>
<dbReference type="SMR" id="Q3B7M3"/>
<dbReference type="FunCoup" id="Q3B7M3">
    <property type="interactions" value="367"/>
</dbReference>
<dbReference type="STRING" id="9913.ENSBTAP00000059785"/>
<dbReference type="PaxDb" id="9913-ENSBTAP00000024178"/>
<dbReference type="GeneID" id="539635"/>
<dbReference type="KEGG" id="bta:539635"/>
<dbReference type="CTD" id="9750"/>
<dbReference type="eggNOG" id="ENOG502QQ7T">
    <property type="taxonomic scope" value="Eukaryota"/>
</dbReference>
<dbReference type="InParanoid" id="Q3B7M3"/>
<dbReference type="OrthoDB" id="9999654at2759"/>
<dbReference type="Proteomes" id="UP000009136">
    <property type="component" value="Unplaced"/>
</dbReference>
<dbReference type="GO" id="GO:0016324">
    <property type="term" value="C:apical plasma membrane"/>
    <property type="evidence" value="ECO:0007669"/>
    <property type="project" value="UniProtKB-SubCell"/>
</dbReference>
<dbReference type="GO" id="GO:0005737">
    <property type="term" value="C:cytoplasm"/>
    <property type="evidence" value="ECO:0000250"/>
    <property type="project" value="UniProtKB"/>
</dbReference>
<dbReference type="GO" id="GO:0005856">
    <property type="term" value="C:cytoskeleton"/>
    <property type="evidence" value="ECO:0000250"/>
    <property type="project" value="UniProtKB"/>
</dbReference>
<dbReference type="GO" id="GO:0030175">
    <property type="term" value="C:filopodium"/>
    <property type="evidence" value="ECO:0000250"/>
    <property type="project" value="UniProtKB"/>
</dbReference>
<dbReference type="GO" id="GO:0032420">
    <property type="term" value="C:stereocilium"/>
    <property type="evidence" value="ECO:0000250"/>
    <property type="project" value="UniProtKB"/>
</dbReference>
<dbReference type="GO" id="GO:0060171">
    <property type="term" value="C:stereocilium membrane"/>
    <property type="evidence" value="ECO:0007669"/>
    <property type="project" value="UniProtKB-SubCell"/>
</dbReference>
<dbReference type="GO" id="GO:0071889">
    <property type="term" value="F:14-3-3 protein binding"/>
    <property type="evidence" value="ECO:0000250"/>
    <property type="project" value="UniProtKB"/>
</dbReference>
<dbReference type="GO" id="GO:0007155">
    <property type="term" value="P:cell adhesion"/>
    <property type="evidence" value="ECO:0007669"/>
    <property type="project" value="UniProtKB-KW"/>
</dbReference>
<dbReference type="GO" id="GO:0030154">
    <property type="term" value="P:cell differentiation"/>
    <property type="evidence" value="ECO:0007669"/>
    <property type="project" value="UniProtKB-KW"/>
</dbReference>
<dbReference type="GO" id="GO:1990869">
    <property type="term" value="P:cellular response to chemokine"/>
    <property type="evidence" value="ECO:0000250"/>
    <property type="project" value="UniProtKB"/>
</dbReference>
<dbReference type="GO" id="GO:0006935">
    <property type="term" value="P:chemotaxis"/>
    <property type="evidence" value="ECO:0007669"/>
    <property type="project" value="UniProtKB-KW"/>
</dbReference>
<dbReference type="GO" id="GO:0007517">
    <property type="term" value="P:muscle organ development"/>
    <property type="evidence" value="ECO:0007669"/>
    <property type="project" value="UniProtKB-KW"/>
</dbReference>
<dbReference type="GO" id="GO:0007162">
    <property type="term" value="P:negative regulation of cell adhesion"/>
    <property type="evidence" value="ECO:0000250"/>
    <property type="project" value="UniProtKB"/>
</dbReference>
<dbReference type="GO" id="GO:1903904">
    <property type="term" value="P:negative regulation of establishment of T cell polarity"/>
    <property type="evidence" value="ECO:0000250"/>
    <property type="project" value="UniProtKB"/>
</dbReference>
<dbReference type="GO" id="GO:1905872">
    <property type="term" value="P:negative regulation of protein localization to cell leading edge"/>
    <property type="evidence" value="ECO:0000250"/>
    <property type="project" value="UniProtKB"/>
</dbReference>
<dbReference type="GO" id="GO:2001107">
    <property type="term" value="P:negative regulation of Rho guanyl-nucleotide exchange factor activity"/>
    <property type="evidence" value="ECO:0000250"/>
    <property type="project" value="UniProtKB"/>
</dbReference>
<dbReference type="GO" id="GO:0035024">
    <property type="term" value="P:negative regulation of Rho protein signal transduction"/>
    <property type="evidence" value="ECO:0000250"/>
    <property type="project" value="UniProtKB"/>
</dbReference>
<dbReference type="GO" id="GO:2000405">
    <property type="term" value="P:negative regulation of T cell migration"/>
    <property type="evidence" value="ECO:0000250"/>
    <property type="project" value="UniProtKB"/>
</dbReference>
<dbReference type="GO" id="GO:0051491">
    <property type="term" value="P:positive regulation of filopodium assembly"/>
    <property type="evidence" value="ECO:0000250"/>
    <property type="project" value="UniProtKB"/>
</dbReference>
<dbReference type="GO" id="GO:0045663">
    <property type="term" value="P:positive regulation of myoblast differentiation"/>
    <property type="evidence" value="ECO:0000250"/>
    <property type="project" value="UniProtKB"/>
</dbReference>
<dbReference type="GO" id="GO:1901741">
    <property type="term" value="P:positive regulation of myoblast fusion"/>
    <property type="evidence" value="ECO:0000250"/>
    <property type="project" value="UniProtKB"/>
</dbReference>
<dbReference type="GO" id="GO:0090023">
    <property type="term" value="P:positive regulation of neutrophil chemotaxis"/>
    <property type="evidence" value="ECO:0000250"/>
    <property type="project" value="UniProtKB"/>
</dbReference>
<dbReference type="GO" id="GO:2000391">
    <property type="term" value="P:positive regulation of neutrophil extravasation"/>
    <property type="evidence" value="ECO:0000250"/>
    <property type="project" value="UniProtKB"/>
</dbReference>
<dbReference type="GO" id="GO:2000114">
    <property type="term" value="P:regulation of establishment of cell polarity"/>
    <property type="evidence" value="ECO:0000250"/>
    <property type="project" value="UniProtKB"/>
</dbReference>
<dbReference type="GO" id="GO:0007605">
    <property type="term" value="P:sensory perception of sound"/>
    <property type="evidence" value="ECO:0000250"/>
    <property type="project" value="UniProtKB"/>
</dbReference>
<dbReference type="FunFam" id="1.25.10.10:FF:000191">
    <property type="entry name" value="RHO family interacting cell polarization regulator 2"/>
    <property type="match status" value="1"/>
</dbReference>
<dbReference type="Gene3D" id="1.25.10.10">
    <property type="entry name" value="Leucine-rich Repeat Variant"/>
    <property type="match status" value="1"/>
</dbReference>
<dbReference type="InterPro" id="IPR011989">
    <property type="entry name" value="ARM-like"/>
</dbReference>
<dbReference type="InterPro" id="IPR016024">
    <property type="entry name" value="ARM-type_fold"/>
</dbReference>
<dbReference type="InterPro" id="IPR031780">
    <property type="entry name" value="FAM65_N"/>
</dbReference>
<dbReference type="InterPro" id="IPR026136">
    <property type="entry name" value="RIPOR3"/>
</dbReference>
<dbReference type="PANTHER" id="PTHR15829">
    <property type="entry name" value="PROTEIN KINASE PKN/PRK1, EFFECTOR"/>
    <property type="match status" value="1"/>
</dbReference>
<dbReference type="PANTHER" id="PTHR15829:SF2">
    <property type="entry name" value="RHO FAMILY-INTERACTING CELL POLARIZATION REGULATOR 2"/>
    <property type="match status" value="1"/>
</dbReference>
<dbReference type="Pfam" id="PF15903">
    <property type="entry name" value="PL48"/>
    <property type="match status" value="1"/>
</dbReference>
<dbReference type="SUPFAM" id="SSF48371">
    <property type="entry name" value="ARM repeat"/>
    <property type="match status" value="1"/>
</dbReference>
<protein>
    <recommendedName>
        <fullName evidence="3">Rho family-interacting cell polarization regulator 2</fullName>
    </recommendedName>
</protein>
<proteinExistence type="evidence at transcript level"/>